<proteinExistence type="predicted"/>
<gene>
    <name type="ordered locus">At4g00315</name>
    <name type="ORF">A_IG005I10.18</name>
    <name type="ORF">F5I10.18</name>
</gene>
<reference key="1">
    <citation type="journal article" date="1999" name="Nature">
        <title>Sequence and analysis of chromosome 4 of the plant Arabidopsis thaliana.</title>
        <authorList>
            <person name="Mayer K.F.X."/>
            <person name="Schueller C."/>
            <person name="Wambutt R."/>
            <person name="Murphy G."/>
            <person name="Volckaert G."/>
            <person name="Pohl T."/>
            <person name="Duesterhoeft A."/>
            <person name="Stiekema W."/>
            <person name="Entian K.-D."/>
            <person name="Terryn N."/>
            <person name="Harris B."/>
            <person name="Ansorge W."/>
            <person name="Brandt P."/>
            <person name="Grivell L.A."/>
            <person name="Rieger M."/>
            <person name="Weichselgartner M."/>
            <person name="de Simone V."/>
            <person name="Obermaier B."/>
            <person name="Mache R."/>
            <person name="Mueller M."/>
            <person name="Kreis M."/>
            <person name="Delseny M."/>
            <person name="Puigdomenech P."/>
            <person name="Watson M."/>
            <person name="Schmidtheini T."/>
            <person name="Reichert B."/>
            <person name="Portetelle D."/>
            <person name="Perez-Alonso M."/>
            <person name="Boutry M."/>
            <person name="Bancroft I."/>
            <person name="Vos P."/>
            <person name="Hoheisel J."/>
            <person name="Zimmermann W."/>
            <person name="Wedler H."/>
            <person name="Ridley P."/>
            <person name="Langham S.-A."/>
            <person name="McCullagh B."/>
            <person name="Bilham L."/>
            <person name="Robben J."/>
            <person name="van der Schueren J."/>
            <person name="Grymonprez B."/>
            <person name="Chuang Y.-J."/>
            <person name="Vandenbussche F."/>
            <person name="Braeken M."/>
            <person name="Weltjens I."/>
            <person name="Voet M."/>
            <person name="Bastiaens I."/>
            <person name="Aert R."/>
            <person name="Defoor E."/>
            <person name="Weitzenegger T."/>
            <person name="Bothe G."/>
            <person name="Ramsperger U."/>
            <person name="Hilbert H."/>
            <person name="Braun M."/>
            <person name="Holzer E."/>
            <person name="Brandt A."/>
            <person name="Peters S."/>
            <person name="van Staveren M."/>
            <person name="Dirkse W."/>
            <person name="Mooijman P."/>
            <person name="Klein Lankhorst R."/>
            <person name="Rose M."/>
            <person name="Hauf J."/>
            <person name="Koetter P."/>
            <person name="Berneiser S."/>
            <person name="Hempel S."/>
            <person name="Feldpausch M."/>
            <person name="Lamberth S."/>
            <person name="Van den Daele H."/>
            <person name="De Keyser A."/>
            <person name="Buysshaert C."/>
            <person name="Gielen J."/>
            <person name="Villarroel R."/>
            <person name="De Clercq R."/>
            <person name="van Montagu M."/>
            <person name="Rogers J."/>
            <person name="Cronin A."/>
            <person name="Quail M.A."/>
            <person name="Bray-Allen S."/>
            <person name="Clark L."/>
            <person name="Doggett J."/>
            <person name="Hall S."/>
            <person name="Kay M."/>
            <person name="Lennard N."/>
            <person name="McLay K."/>
            <person name="Mayes R."/>
            <person name="Pettett A."/>
            <person name="Rajandream M.A."/>
            <person name="Lyne M."/>
            <person name="Benes V."/>
            <person name="Rechmann S."/>
            <person name="Borkova D."/>
            <person name="Bloecker H."/>
            <person name="Scharfe M."/>
            <person name="Grimm M."/>
            <person name="Loehnert T.-H."/>
            <person name="Dose S."/>
            <person name="de Haan M."/>
            <person name="Maarse A.C."/>
            <person name="Schaefer M."/>
            <person name="Mueller-Auer S."/>
            <person name="Gabel C."/>
            <person name="Fuchs M."/>
            <person name="Fartmann B."/>
            <person name="Granderath K."/>
            <person name="Dauner D."/>
            <person name="Herzl A."/>
            <person name="Neumann S."/>
            <person name="Argiriou A."/>
            <person name="Vitale D."/>
            <person name="Liguori R."/>
            <person name="Piravandi E."/>
            <person name="Massenet O."/>
            <person name="Quigley F."/>
            <person name="Clabauld G."/>
            <person name="Muendlein A."/>
            <person name="Felber R."/>
            <person name="Schnabl S."/>
            <person name="Hiller R."/>
            <person name="Schmidt W."/>
            <person name="Lecharny A."/>
            <person name="Aubourg S."/>
            <person name="Chefdor F."/>
            <person name="Cooke R."/>
            <person name="Berger C."/>
            <person name="Monfort A."/>
            <person name="Casacuberta E."/>
            <person name="Gibbons T."/>
            <person name="Weber N."/>
            <person name="Vandenbol M."/>
            <person name="Bargues M."/>
            <person name="Terol J."/>
            <person name="Torres A."/>
            <person name="Perez-Perez A."/>
            <person name="Purnelle B."/>
            <person name="Bent E."/>
            <person name="Johnson S."/>
            <person name="Tacon D."/>
            <person name="Jesse T."/>
            <person name="Heijnen L."/>
            <person name="Schwarz S."/>
            <person name="Scholler P."/>
            <person name="Heber S."/>
            <person name="Francs P."/>
            <person name="Bielke C."/>
            <person name="Frishman D."/>
            <person name="Haase D."/>
            <person name="Lemcke K."/>
            <person name="Mewes H.-W."/>
            <person name="Stocker S."/>
            <person name="Zaccaria P."/>
            <person name="Bevan M."/>
            <person name="Wilson R.K."/>
            <person name="de la Bastide M."/>
            <person name="Habermann K."/>
            <person name="Parnell L."/>
            <person name="Dedhia N."/>
            <person name="Gnoj L."/>
            <person name="Schutz K."/>
            <person name="Huang E."/>
            <person name="Spiegel L."/>
            <person name="Sekhon M."/>
            <person name="Murray J."/>
            <person name="Sheet P."/>
            <person name="Cordes M."/>
            <person name="Abu-Threideh J."/>
            <person name="Stoneking T."/>
            <person name="Kalicki J."/>
            <person name="Graves T."/>
            <person name="Harmon G."/>
            <person name="Edwards J."/>
            <person name="Latreille P."/>
            <person name="Courtney L."/>
            <person name="Cloud J."/>
            <person name="Abbott A."/>
            <person name="Scott K."/>
            <person name="Johnson D."/>
            <person name="Minx P."/>
            <person name="Bentley D."/>
            <person name="Fulton B."/>
            <person name="Miller N."/>
            <person name="Greco T."/>
            <person name="Kemp K."/>
            <person name="Kramer J."/>
            <person name="Fulton L."/>
            <person name="Mardis E."/>
            <person name="Dante M."/>
            <person name="Pepin K."/>
            <person name="Hillier L.W."/>
            <person name="Nelson J."/>
            <person name="Spieth J."/>
            <person name="Ryan E."/>
            <person name="Andrews S."/>
            <person name="Geisel C."/>
            <person name="Layman D."/>
            <person name="Du H."/>
            <person name="Ali J."/>
            <person name="Berghoff A."/>
            <person name="Jones K."/>
            <person name="Drone K."/>
            <person name="Cotton M."/>
            <person name="Joshu C."/>
            <person name="Antonoiu B."/>
            <person name="Zidanic M."/>
            <person name="Strong C."/>
            <person name="Sun H."/>
            <person name="Lamar B."/>
            <person name="Yordan C."/>
            <person name="Ma P."/>
            <person name="Zhong J."/>
            <person name="Preston R."/>
            <person name="Vil D."/>
            <person name="Shekher M."/>
            <person name="Matero A."/>
            <person name="Shah R."/>
            <person name="Swaby I.K."/>
            <person name="O'Shaughnessy A."/>
            <person name="Rodriguez M."/>
            <person name="Hoffman J."/>
            <person name="Till S."/>
            <person name="Granat S."/>
            <person name="Shohdy N."/>
            <person name="Hasegawa A."/>
            <person name="Hameed A."/>
            <person name="Lodhi M."/>
            <person name="Johnson A."/>
            <person name="Chen E."/>
            <person name="Marra M.A."/>
            <person name="Martienssen R."/>
            <person name="McCombie W.R."/>
        </authorList>
    </citation>
    <scope>NUCLEOTIDE SEQUENCE [LARGE SCALE GENOMIC DNA]</scope>
    <source>
        <strain>cv. Columbia</strain>
    </source>
</reference>
<reference key="2">
    <citation type="journal article" date="2017" name="Plant J.">
        <title>Araport11: a complete reannotation of the Arabidopsis thaliana reference genome.</title>
        <authorList>
            <person name="Cheng C.Y."/>
            <person name="Krishnakumar V."/>
            <person name="Chan A.P."/>
            <person name="Thibaud-Nissen F."/>
            <person name="Schobel S."/>
            <person name="Town C.D."/>
        </authorList>
    </citation>
    <scope>GENOME REANNOTATION</scope>
    <source>
        <strain>cv. Columbia</strain>
    </source>
</reference>
<sequence length="441" mass="50951">MDKTSQLPDELLVKVLSFLPTKDAVRTSLLSMRWKSLWMWLPKLEYDFRHYSVSEGQGLARFITLSLLGHKAPAIESLSLKLRYGAIGSIKPEDIYLWVSLAVHDSNVRELSLKLCTFAERPTKLPKSLYKCKSIVILKLKDEILVDVPRKVCLPSLKTLFLGRVTYSDEDSLHRLLSNCPVLEDLVVERDRIDNLGKLSVVVKSLQRLTLKMSCPCHLDGIMMNTPSLKYLKVTDERQESDSDNESDSDSPRYFYDFEDMPKLEEADFVLTFQNIKKFFKFVTSIKRLSLCLGVYTEESLYHEGLVFNQLEQLKICSCDSDWSILLSRLLESSPNLRELEAYVIEDHPDRRVDLPNQWGNQLNCVPKCLLSSLETFKWSEMYGLLQNQMDVAKYILRNARCLKSATIFFPTTYAKETRDEMIEELSLSFQGPETCQVFFH</sequence>
<evidence type="ECO:0000255" key="1">
    <source>
        <dbReference type="PROSITE-ProRule" id="PRU00080"/>
    </source>
</evidence>
<evidence type="ECO:0000305" key="2"/>
<keyword id="KW-0433">Leucine-rich repeat</keyword>
<keyword id="KW-1185">Reference proteome</keyword>
<keyword id="KW-0677">Repeat</keyword>
<name>FDL24_ARATH</name>
<comment type="sequence caution" evidence="2">
    <conflict type="erroneous gene model prediction">
        <sequence resource="EMBL-CDS" id="AAB62837"/>
    </conflict>
    <text>The predicted gene At4g00315 has been split into 2 genes: At4g00320 and At4g00320.</text>
</comment>
<comment type="sequence caution" evidence="2">
    <conflict type="erroneous gene model prediction">
        <sequence resource="EMBL-CDS" id="AAF02795"/>
    </conflict>
    <text>The predicted gene At4g00315 has been split into 2 genes: At4g00320 and At4g00320.</text>
</comment>
<comment type="sequence caution" evidence="2">
    <conflict type="erroneous gene model prediction">
        <sequence resource="EMBL-CDS" id="CAB80790"/>
    </conflict>
    <text>The predicted gene At4g00315 has been split into 2 genes: At4g00320 and At4g00320.</text>
</comment>
<protein>
    <recommendedName>
        <fullName>Putative F-box/FBD/LRR-repeat protein At4g00315</fullName>
    </recommendedName>
</protein>
<feature type="chain" id="PRO_0000274960" description="Putative F-box/FBD/LRR-repeat protein At4g00315">
    <location>
        <begin position="1"/>
        <end position="441"/>
    </location>
</feature>
<feature type="domain" description="F-box" evidence="1">
    <location>
        <begin position="1"/>
        <end position="47"/>
    </location>
</feature>
<feature type="repeat" description="LRR 1">
    <location>
        <begin position="57"/>
        <end position="82"/>
    </location>
</feature>
<feature type="repeat" description="LRR 2">
    <location>
        <begin position="87"/>
        <end position="115"/>
    </location>
</feature>
<feature type="repeat" description="LRR 3">
    <location>
        <begin position="137"/>
        <end position="164"/>
    </location>
</feature>
<feature type="repeat" description="LRR 4">
    <location>
        <begin position="165"/>
        <end position="190"/>
    </location>
</feature>
<feature type="repeat" description="LRR 5">
    <location>
        <begin position="211"/>
        <end position="236"/>
    </location>
</feature>
<feature type="repeat" description="LRR 6">
    <location>
        <begin position="243"/>
        <end position="271"/>
    </location>
</feature>
<feature type="repeat" description="LRR 7">
    <location>
        <begin position="293"/>
        <end position="318"/>
    </location>
</feature>
<feature type="repeat" description="LRR 8">
    <location>
        <begin position="319"/>
        <end position="344"/>
    </location>
</feature>
<feature type="domain" description="FBD">
    <location>
        <begin position="358"/>
        <end position="410"/>
    </location>
</feature>
<organism>
    <name type="scientific">Arabidopsis thaliana</name>
    <name type="common">Mouse-ear cress</name>
    <dbReference type="NCBI Taxonomy" id="3702"/>
    <lineage>
        <taxon>Eukaryota</taxon>
        <taxon>Viridiplantae</taxon>
        <taxon>Streptophyta</taxon>
        <taxon>Embryophyta</taxon>
        <taxon>Tracheophyta</taxon>
        <taxon>Spermatophyta</taxon>
        <taxon>Magnoliopsida</taxon>
        <taxon>eudicotyledons</taxon>
        <taxon>Gunneridae</taxon>
        <taxon>Pentapetalae</taxon>
        <taxon>rosids</taxon>
        <taxon>malvids</taxon>
        <taxon>Brassicales</taxon>
        <taxon>Brassicaceae</taxon>
        <taxon>Camelineae</taxon>
        <taxon>Arabidopsis</taxon>
    </lineage>
</organism>
<accession>Q3EAE5</accession>
<accession>O23070</accession>
<dbReference type="EMBL" id="AF013293">
    <property type="protein sequence ID" value="AAB62837.1"/>
    <property type="status" value="ALT_SEQ"/>
    <property type="molecule type" value="Genomic_DNA"/>
</dbReference>
<dbReference type="EMBL" id="AF195115">
    <property type="protein sequence ID" value="AAF02795.1"/>
    <property type="status" value="ALT_SEQ"/>
    <property type="molecule type" value="Genomic_DNA"/>
</dbReference>
<dbReference type="EMBL" id="AL161471">
    <property type="protein sequence ID" value="CAB80790.1"/>
    <property type="status" value="ALT_SEQ"/>
    <property type="molecule type" value="Genomic_DNA"/>
</dbReference>
<dbReference type="EMBL" id="CP002687">
    <property type="protein sequence ID" value="AEE81856.1"/>
    <property type="molecule type" value="Genomic_DNA"/>
</dbReference>
<dbReference type="PIR" id="T01539">
    <property type="entry name" value="T01539"/>
</dbReference>
<dbReference type="RefSeq" id="NP_849271.1">
    <property type="nucleotide sequence ID" value="NM_178940.1"/>
</dbReference>
<dbReference type="FunCoup" id="Q3EAE5">
    <property type="interactions" value="2"/>
</dbReference>
<dbReference type="PaxDb" id="3702-AT4G00315.1"/>
<dbReference type="EnsemblPlants" id="AT4G00315.1">
    <property type="protein sequence ID" value="AT4G00315.1"/>
    <property type="gene ID" value="AT4G00315"/>
</dbReference>
<dbReference type="GeneID" id="827929"/>
<dbReference type="Gramene" id="AT4G00315.1">
    <property type="protein sequence ID" value="AT4G00315.1"/>
    <property type="gene ID" value="AT4G00315"/>
</dbReference>
<dbReference type="KEGG" id="ath:AT4G00315"/>
<dbReference type="Araport" id="AT4G00315"/>
<dbReference type="TAIR" id="AT4G00315">
    <property type="gene designation" value="FOL1"/>
</dbReference>
<dbReference type="HOGENOM" id="CLU_010721_1_2_1"/>
<dbReference type="InParanoid" id="Q3EAE5"/>
<dbReference type="OMA" id="FAERPTK"/>
<dbReference type="PhylomeDB" id="Q3EAE5"/>
<dbReference type="PRO" id="PR:Q3EAE5"/>
<dbReference type="Proteomes" id="UP000006548">
    <property type="component" value="Chromosome 4"/>
</dbReference>
<dbReference type="ExpressionAtlas" id="Q3EAE5">
    <property type="expression patterns" value="differential"/>
</dbReference>
<dbReference type="GO" id="GO:0048579">
    <property type="term" value="P:negative regulation of long-day photoperiodism, flowering"/>
    <property type="evidence" value="ECO:0000316"/>
    <property type="project" value="TAIR"/>
</dbReference>
<dbReference type="GO" id="GO:0048587">
    <property type="term" value="P:regulation of short-day photoperiodism, flowering"/>
    <property type="evidence" value="ECO:0000316"/>
    <property type="project" value="TAIR"/>
</dbReference>
<dbReference type="CDD" id="cd22160">
    <property type="entry name" value="F-box_AtFBL13-like"/>
    <property type="match status" value="1"/>
</dbReference>
<dbReference type="Gene3D" id="1.20.1280.50">
    <property type="match status" value="1"/>
</dbReference>
<dbReference type="Gene3D" id="3.80.10.10">
    <property type="entry name" value="Ribonuclease Inhibitor"/>
    <property type="match status" value="1"/>
</dbReference>
<dbReference type="InterPro" id="IPR036047">
    <property type="entry name" value="F-box-like_dom_sf"/>
</dbReference>
<dbReference type="InterPro" id="IPR053781">
    <property type="entry name" value="F-box_AtFBL13-like"/>
</dbReference>
<dbReference type="InterPro" id="IPR001810">
    <property type="entry name" value="F-box_dom"/>
</dbReference>
<dbReference type="InterPro" id="IPR006566">
    <property type="entry name" value="FBD"/>
</dbReference>
<dbReference type="InterPro" id="IPR050232">
    <property type="entry name" value="FBL13/AtMIF1-like"/>
</dbReference>
<dbReference type="InterPro" id="IPR032675">
    <property type="entry name" value="LRR_dom_sf"/>
</dbReference>
<dbReference type="InterPro" id="IPR055411">
    <property type="entry name" value="LRR_FXL15/At3g58940/PEG3-like"/>
</dbReference>
<dbReference type="PANTHER" id="PTHR31900">
    <property type="entry name" value="F-BOX/RNI SUPERFAMILY PROTEIN-RELATED"/>
    <property type="match status" value="1"/>
</dbReference>
<dbReference type="PANTHER" id="PTHR31900:SF28">
    <property type="entry name" value="FBD DOMAIN-CONTAINING PROTEIN"/>
    <property type="match status" value="1"/>
</dbReference>
<dbReference type="Pfam" id="PF00646">
    <property type="entry name" value="F-box"/>
    <property type="match status" value="1"/>
</dbReference>
<dbReference type="Pfam" id="PF08387">
    <property type="entry name" value="FBD"/>
    <property type="match status" value="1"/>
</dbReference>
<dbReference type="Pfam" id="PF24758">
    <property type="entry name" value="LRR_At5g56370"/>
    <property type="match status" value="1"/>
</dbReference>
<dbReference type="SMART" id="SM00579">
    <property type="entry name" value="FBD"/>
    <property type="match status" value="1"/>
</dbReference>
<dbReference type="SMART" id="SM00256">
    <property type="entry name" value="FBOX"/>
    <property type="match status" value="1"/>
</dbReference>
<dbReference type="SUPFAM" id="SSF81383">
    <property type="entry name" value="F-box domain"/>
    <property type="match status" value="1"/>
</dbReference>
<dbReference type="SUPFAM" id="SSF52047">
    <property type="entry name" value="RNI-like"/>
    <property type="match status" value="1"/>
</dbReference>
<dbReference type="PROSITE" id="PS50181">
    <property type="entry name" value="FBOX"/>
    <property type="match status" value="1"/>
</dbReference>